<organism>
    <name type="scientific">Xanthomonas campestris pv. campestris (strain ATCC 33913 / DSM 3586 / NCPPB 528 / LMG 568 / P 25)</name>
    <dbReference type="NCBI Taxonomy" id="190485"/>
    <lineage>
        <taxon>Bacteria</taxon>
        <taxon>Pseudomonadati</taxon>
        <taxon>Pseudomonadota</taxon>
        <taxon>Gammaproteobacteria</taxon>
        <taxon>Lysobacterales</taxon>
        <taxon>Lysobacteraceae</taxon>
        <taxon>Xanthomonas</taxon>
    </lineage>
</organism>
<sequence>MNQVARGAGAKRYADAKAALAGVVADGQTLAVGGFGLCGIPEALIAALRDSAVSGLTVISNNAGVDGFGLGQLLATRQIRKMISSYVGENKEFERQYLAGELELEFNPQGTLAERLRAGGAGIPAFYTATGYGTIVAYGKETREFDGKHYVLETALQADVALIKAWRADTAGNLVFRKTARNFNPACAMAGRVCIAEVEEIVELGAIDPDQVHLPGIYIDRLVLNATPEKRIEQRTVRQGDK</sequence>
<keyword id="KW-0448">Lipopolysaccharide biosynthesis</keyword>
<keyword id="KW-1185">Reference proteome</keyword>
<keyword id="KW-0808">Transferase</keyword>
<feature type="chain" id="PRO_0000157913" description="Succinyl-CoA:3-ketoacid coenzyme A transferase subunit A">
    <location>
        <begin position="1"/>
        <end position="242"/>
    </location>
</feature>
<feature type="binding site" evidence="2">
    <location>
        <begin position="33"/>
        <end position="39"/>
    </location>
    <ligand>
        <name>CoA</name>
        <dbReference type="ChEBI" id="CHEBI:57287"/>
    </ligand>
</feature>
<comment type="catalytic activity">
    <reaction>
        <text>a 3-oxo acid + succinyl-CoA = a 3-oxoacyl-CoA + succinate</text>
        <dbReference type="Rhea" id="RHEA:24564"/>
        <dbReference type="ChEBI" id="CHEBI:30031"/>
        <dbReference type="ChEBI" id="CHEBI:35973"/>
        <dbReference type="ChEBI" id="CHEBI:57292"/>
        <dbReference type="ChEBI" id="CHEBI:90726"/>
        <dbReference type="EC" id="2.8.3.5"/>
    </reaction>
</comment>
<comment type="pathway">
    <text>Bacterial outer membrane biogenesis; lipopolysaccharide biosynthesis.</text>
</comment>
<comment type="subunit">
    <text evidence="1">Heterodimer of a subunit A and a subunit B.</text>
</comment>
<comment type="similarity">
    <text evidence="3">Belongs to the 3-oxoacid CoA-transferase subunit A family.</text>
</comment>
<gene>
    <name type="primary">lpsI</name>
    <name type="synonym">wxcI</name>
    <name type="ordered locus">XCC0627</name>
</gene>
<proteinExistence type="inferred from homology"/>
<accession>P0C7I7</accession>
<accession>O34264</accession>
<reference key="1">
    <citation type="journal article" date="2002" name="Nature">
        <title>Comparison of the genomes of two Xanthomonas pathogens with differing host specificities.</title>
        <authorList>
            <person name="da Silva A.C.R."/>
            <person name="Ferro J.A."/>
            <person name="Reinach F.C."/>
            <person name="Farah C.S."/>
            <person name="Furlan L.R."/>
            <person name="Quaggio R.B."/>
            <person name="Monteiro-Vitorello C.B."/>
            <person name="Van Sluys M.A."/>
            <person name="Almeida N.F. Jr."/>
            <person name="Alves L.M.C."/>
            <person name="do Amaral A.M."/>
            <person name="Bertolini M.C."/>
            <person name="Camargo L.E.A."/>
            <person name="Camarotte G."/>
            <person name="Cannavan F."/>
            <person name="Cardozo J."/>
            <person name="Chambergo F."/>
            <person name="Ciapina L.P."/>
            <person name="Cicarelli R.M.B."/>
            <person name="Coutinho L.L."/>
            <person name="Cursino-Santos J.R."/>
            <person name="El-Dorry H."/>
            <person name="Faria J.B."/>
            <person name="Ferreira A.J.S."/>
            <person name="Ferreira R.C.C."/>
            <person name="Ferro M.I.T."/>
            <person name="Formighieri E.F."/>
            <person name="Franco M.C."/>
            <person name="Greggio C.C."/>
            <person name="Gruber A."/>
            <person name="Katsuyama A.M."/>
            <person name="Kishi L.T."/>
            <person name="Leite R.P."/>
            <person name="Lemos E.G.M."/>
            <person name="Lemos M.V.F."/>
            <person name="Locali E.C."/>
            <person name="Machado M.A."/>
            <person name="Madeira A.M.B.N."/>
            <person name="Martinez-Rossi N.M."/>
            <person name="Martins E.C."/>
            <person name="Meidanis J."/>
            <person name="Menck C.F.M."/>
            <person name="Miyaki C.Y."/>
            <person name="Moon D.H."/>
            <person name="Moreira L.M."/>
            <person name="Novo M.T.M."/>
            <person name="Okura V.K."/>
            <person name="Oliveira M.C."/>
            <person name="Oliveira V.R."/>
            <person name="Pereira H.A."/>
            <person name="Rossi A."/>
            <person name="Sena J.A.D."/>
            <person name="Silva C."/>
            <person name="de Souza R.F."/>
            <person name="Spinola L.A.F."/>
            <person name="Takita M.A."/>
            <person name="Tamura R.E."/>
            <person name="Teixeira E.C."/>
            <person name="Tezza R.I.D."/>
            <person name="Trindade dos Santos M."/>
            <person name="Truffi D."/>
            <person name="Tsai S.M."/>
            <person name="White F.F."/>
            <person name="Setubal J.C."/>
            <person name="Kitajima J.P."/>
        </authorList>
    </citation>
    <scope>NUCLEOTIDE SEQUENCE [LARGE SCALE GENOMIC DNA]</scope>
    <source>
        <strain>ATCC 33913 / DSM 3586 / NCPPB 528 / LMG 568 / P 25</strain>
    </source>
</reference>
<evidence type="ECO:0000250" key="1"/>
<evidence type="ECO:0000255" key="2"/>
<evidence type="ECO:0000305" key="3"/>
<dbReference type="EC" id="2.8.3.5"/>
<dbReference type="EMBL" id="AE008922">
    <property type="protein sequence ID" value="AAM39943.1"/>
    <property type="molecule type" value="Genomic_DNA"/>
</dbReference>
<dbReference type="RefSeq" id="NP_636019.1">
    <property type="nucleotide sequence ID" value="NC_003902.1"/>
</dbReference>
<dbReference type="RefSeq" id="WP_011035870.1">
    <property type="nucleotide sequence ID" value="NC_003902.1"/>
</dbReference>
<dbReference type="SMR" id="P0C7I7"/>
<dbReference type="STRING" id="190485.XCC0627"/>
<dbReference type="EnsemblBacteria" id="AAM39943">
    <property type="protein sequence ID" value="AAM39943"/>
    <property type="gene ID" value="XCC0627"/>
</dbReference>
<dbReference type="KEGG" id="xcc:XCC0627"/>
<dbReference type="PATRIC" id="fig|190485.4.peg.688"/>
<dbReference type="eggNOG" id="COG1788">
    <property type="taxonomic scope" value="Bacteria"/>
</dbReference>
<dbReference type="HOGENOM" id="CLU_019942_2_0_6"/>
<dbReference type="OrthoDB" id="9777193at2"/>
<dbReference type="UniPathway" id="UPA00030"/>
<dbReference type="Proteomes" id="UP000001010">
    <property type="component" value="Chromosome"/>
</dbReference>
<dbReference type="GO" id="GO:0008260">
    <property type="term" value="F:succinyl-CoA:3-oxo-acid CoA-transferase activity"/>
    <property type="evidence" value="ECO:0007669"/>
    <property type="project" value="UniProtKB-EC"/>
</dbReference>
<dbReference type="GO" id="GO:0009103">
    <property type="term" value="P:lipopolysaccharide biosynthetic process"/>
    <property type="evidence" value="ECO:0007669"/>
    <property type="project" value="UniProtKB-UniPathway"/>
</dbReference>
<dbReference type="Gene3D" id="3.40.1080.10">
    <property type="entry name" value="Glutaconate Coenzyme A-transferase"/>
    <property type="match status" value="1"/>
</dbReference>
<dbReference type="InterPro" id="IPR012792">
    <property type="entry name" value="3-oxoacid_CoA-transf_A"/>
</dbReference>
<dbReference type="InterPro" id="IPR004165">
    <property type="entry name" value="CoA_trans_fam_I"/>
</dbReference>
<dbReference type="InterPro" id="IPR004163">
    <property type="entry name" value="CoA_transf_BS"/>
</dbReference>
<dbReference type="InterPro" id="IPR037171">
    <property type="entry name" value="NagB/RpiA_transferase-like"/>
</dbReference>
<dbReference type="NCBIfam" id="TIGR02429">
    <property type="entry name" value="pcaI_scoA_fam"/>
    <property type="match status" value="1"/>
</dbReference>
<dbReference type="PANTHER" id="PTHR13707:SF60">
    <property type="entry name" value="ACETATE COA-TRANSFERASE SUBUNIT ALPHA"/>
    <property type="match status" value="1"/>
</dbReference>
<dbReference type="PANTHER" id="PTHR13707">
    <property type="entry name" value="KETOACID-COENZYME A TRANSFERASE"/>
    <property type="match status" value="1"/>
</dbReference>
<dbReference type="Pfam" id="PF01144">
    <property type="entry name" value="CoA_trans"/>
    <property type="match status" value="1"/>
</dbReference>
<dbReference type="SMART" id="SM00882">
    <property type="entry name" value="CoA_trans"/>
    <property type="match status" value="1"/>
</dbReference>
<dbReference type="SUPFAM" id="SSF100950">
    <property type="entry name" value="NagB/RpiA/CoA transferase-like"/>
    <property type="match status" value="1"/>
</dbReference>
<dbReference type="PROSITE" id="PS01273">
    <property type="entry name" value="COA_TRANSF_1"/>
    <property type="match status" value="1"/>
</dbReference>
<protein>
    <recommendedName>
        <fullName>Succinyl-CoA:3-ketoacid coenzyme A transferase subunit A</fullName>
        <ecNumber>2.8.3.5</ecNumber>
    </recommendedName>
    <alternativeName>
        <fullName>Succinyl-CoA:3-oxoacid CoA-transferase</fullName>
        <shortName>OXCT A</shortName>
    </alternativeName>
</protein>
<name>SCOA_XANCP</name>